<proteinExistence type="inferred from homology"/>
<name>RLMH_SALPB</name>
<keyword id="KW-0963">Cytoplasm</keyword>
<keyword id="KW-0489">Methyltransferase</keyword>
<keyword id="KW-0698">rRNA processing</keyword>
<keyword id="KW-0949">S-adenosyl-L-methionine</keyword>
<keyword id="KW-0808">Transferase</keyword>
<organism>
    <name type="scientific">Salmonella paratyphi B (strain ATCC BAA-1250 / SPB7)</name>
    <dbReference type="NCBI Taxonomy" id="1016998"/>
    <lineage>
        <taxon>Bacteria</taxon>
        <taxon>Pseudomonadati</taxon>
        <taxon>Pseudomonadota</taxon>
        <taxon>Gammaproteobacteria</taxon>
        <taxon>Enterobacterales</taxon>
        <taxon>Enterobacteriaceae</taxon>
        <taxon>Salmonella</taxon>
    </lineage>
</organism>
<evidence type="ECO:0000255" key="1">
    <source>
        <dbReference type="HAMAP-Rule" id="MF_00658"/>
    </source>
</evidence>
<reference key="1">
    <citation type="submission" date="2007-11" db="EMBL/GenBank/DDBJ databases">
        <authorList>
            <consortium name="The Salmonella enterica serovar Paratyphi B Genome Sequencing Project"/>
            <person name="McClelland M."/>
            <person name="Sanderson E.K."/>
            <person name="Porwollik S."/>
            <person name="Spieth J."/>
            <person name="Clifton W.S."/>
            <person name="Fulton R."/>
            <person name="Cordes M."/>
            <person name="Wollam A."/>
            <person name="Shah N."/>
            <person name="Pepin K."/>
            <person name="Bhonagiri V."/>
            <person name="Nash W."/>
            <person name="Johnson M."/>
            <person name="Thiruvilangam P."/>
            <person name="Wilson R."/>
        </authorList>
    </citation>
    <scope>NUCLEOTIDE SEQUENCE [LARGE SCALE GENOMIC DNA]</scope>
    <source>
        <strain>ATCC BAA-1250 / SPB7</strain>
    </source>
</reference>
<dbReference type="EC" id="2.1.1.177" evidence="1"/>
<dbReference type="EMBL" id="CP000886">
    <property type="protein sequence ID" value="ABX68275.1"/>
    <property type="molecule type" value="Genomic_DNA"/>
</dbReference>
<dbReference type="RefSeq" id="WP_000776107.1">
    <property type="nucleotide sequence ID" value="NC_010102.1"/>
</dbReference>
<dbReference type="SMR" id="A9MUL2"/>
<dbReference type="GeneID" id="66755108"/>
<dbReference type="KEGG" id="spq:SPAB_02911"/>
<dbReference type="PATRIC" id="fig|1016998.12.peg.2744"/>
<dbReference type="HOGENOM" id="CLU_100552_1_0_6"/>
<dbReference type="BioCyc" id="SENT1016998:SPAB_RS11860-MONOMER"/>
<dbReference type="Proteomes" id="UP000008556">
    <property type="component" value="Chromosome"/>
</dbReference>
<dbReference type="GO" id="GO:0005737">
    <property type="term" value="C:cytoplasm"/>
    <property type="evidence" value="ECO:0007669"/>
    <property type="project" value="UniProtKB-SubCell"/>
</dbReference>
<dbReference type="GO" id="GO:0070038">
    <property type="term" value="F:rRNA (pseudouridine-N3-)-methyltransferase activity"/>
    <property type="evidence" value="ECO:0007669"/>
    <property type="project" value="UniProtKB-UniRule"/>
</dbReference>
<dbReference type="CDD" id="cd18081">
    <property type="entry name" value="RlmH-like"/>
    <property type="match status" value="1"/>
</dbReference>
<dbReference type="FunFam" id="3.40.1280.10:FF:000004">
    <property type="entry name" value="Ribosomal RNA large subunit methyltransferase H"/>
    <property type="match status" value="1"/>
</dbReference>
<dbReference type="Gene3D" id="3.40.1280.10">
    <property type="match status" value="1"/>
</dbReference>
<dbReference type="HAMAP" id="MF_00658">
    <property type="entry name" value="23SrRNA_methyltr_H"/>
    <property type="match status" value="1"/>
</dbReference>
<dbReference type="InterPro" id="IPR029028">
    <property type="entry name" value="Alpha/beta_knot_MTases"/>
</dbReference>
<dbReference type="InterPro" id="IPR003742">
    <property type="entry name" value="RlmH-like"/>
</dbReference>
<dbReference type="InterPro" id="IPR029026">
    <property type="entry name" value="tRNA_m1G_MTases_N"/>
</dbReference>
<dbReference type="NCBIfam" id="NF000984">
    <property type="entry name" value="PRK00103.1-1"/>
    <property type="match status" value="1"/>
</dbReference>
<dbReference type="NCBIfam" id="NF000986">
    <property type="entry name" value="PRK00103.1-4"/>
    <property type="match status" value="1"/>
</dbReference>
<dbReference type="NCBIfam" id="TIGR00246">
    <property type="entry name" value="tRNA_RlmH_YbeA"/>
    <property type="match status" value="1"/>
</dbReference>
<dbReference type="PANTHER" id="PTHR33603">
    <property type="entry name" value="METHYLTRANSFERASE"/>
    <property type="match status" value="1"/>
</dbReference>
<dbReference type="PANTHER" id="PTHR33603:SF1">
    <property type="entry name" value="RIBOSOMAL RNA LARGE SUBUNIT METHYLTRANSFERASE H"/>
    <property type="match status" value="1"/>
</dbReference>
<dbReference type="Pfam" id="PF02590">
    <property type="entry name" value="SPOUT_MTase"/>
    <property type="match status" value="1"/>
</dbReference>
<dbReference type="PIRSF" id="PIRSF004505">
    <property type="entry name" value="MT_bac"/>
    <property type="match status" value="1"/>
</dbReference>
<dbReference type="SUPFAM" id="SSF75217">
    <property type="entry name" value="alpha/beta knot"/>
    <property type="match status" value="1"/>
</dbReference>
<protein>
    <recommendedName>
        <fullName evidence="1">Ribosomal RNA large subunit methyltransferase H</fullName>
        <ecNumber evidence="1">2.1.1.177</ecNumber>
    </recommendedName>
    <alternativeName>
        <fullName evidence="1">23S rRNA (pseudouridine1915-N3)-methyltransferase</fullName>
    </alternativeName>
    <alternativeName>
        <fullName evidence="1">23S rRNA m3Psi1915 methyltransferase</fullName>
    </alternativeName>
    <alternativeName>
        <fullName evidence="1">rRNA (pseudouridine-N3-)-methyltransferase RlmH</fullName>
    </alternativeName>
</protein>
<feature type="chain" id="PRO_1000082812" description="Ribosomal RNA large subunit methyltransferase H">
    <location>
        <begin position="1"/>
        <end position="155"/>
    </location>
</feature>
<feature type="binding site" evidence="1">
    <location>
        <position position="72"/>
    </location>
    <ligand>
        <name>S-adenosyl-L-methionine</name>
        <dbReference type="ChEBI" id="CHEBI:59789"/>
    </ligand>
</feature>
<feature type="binding site" evidence="1">
    <location>
        <position position="103"/>
    </location>
    <ligand>
        <name>S-adenosyl-L-methionine</name>
        <dbReference type="ChEBI" id="CHEBI:59789"/>
    </ligand>
</feature>
<feature type="binding site" evidence="1">
    <location>
        <begin position="122"/>
        <end position="127"/>
    </location>
    <ligand>
        <name>S-adenosyl-L-methionine</name>
        <dbReference type="ChEBI" id="CHEBI:59789"/>
    </ligand>
</feature>
<comment type="function">
    <text evidence="1">Specifically methylates the pseudouridine at position 1915 (m3Psi1915) in 23S rRNA.</text>
</comment>
<comment type="catalytic activity">
    <reaction evidence="1">
        <text>pseudouridine(1915) in 23S rRNA + S-adenosyl-L-methionine = N(3)-methylpseudouridine(1915) in 23S rRNA + S-adenosyl-L-homocysteine + H(+)</text>
        <dbReference type="Rhea" id="RHEA:42752"/>
        <dbReference type="Rhea" id="RHEA-COMP:10221"/>
        <dbReference type="Rhea" id="RHEA-COMP:10222"/>
        <dbReference type="ChEBI" id="CHEBI:15378"/>
        <dbReference type="ChEBI" id="CHEBI:57856"/>
        <dbReference type="ChEBI" id="CHEBI:59789"/>
        <dbReference type="ChEBI" id="CHEBI:65314"/>
        <dbReference type="ChEBI" id="CHEBI:74486"/>
        <dbReference type="EC" id="2.1.1.177"/>
    </reaction>
</comment>
<comment type="subunit">
    <text evidence="1">Homodimer.</text>
</comment>
<comment type="subcellular location">
    <subcellularLocation>
        <location evidence="1">Cytoplasm</location>
    </subcellularLocation>
</comment>
<comment type="similarity">
    <text evidence="1">Belongs to the RNA methyltransferase RlmH family.</text>
</comment>
<sequence>MKLQLVAVGTKMPDWVQTGFTEYLRRFPKDMPFELIEIPAGKRGKNADIKRILDKEGEQMLAAAGKNRIVTLDIPGKPWDTPQLANELERWKQDGRDVSLLIGGPEGLSPACKAAAEQSWSLSALTLPHPLVRVLVAESLYRAWSITTNHPYHRE</sequence>
<gene>
    <name evidence="1" type="primary">rlmH</name>
    <name type="ordered locus">SPAB_02911</name>
</gene>
<accession>A9MUL2</accession>